<organism>
    <name type="scientific">Mus musculus</name>
    <name type="common">Mouse</name>
    <dbReference type="NCBI Taxonomy" id="10090"/>
    <lineage>
        <taxon>Eukaryota</taxon>
        <taxon>Metazoa</taxon>
        <taxon>Chordata</taxon>
        <taxon>Craniata</taxon>
        <taxon>Vertebrata</taxon>
        <taxon>Euteleostomi</taxon>
        <taxon>Mammalia</taxon>
        <taxon>Eutheria</taxon>
        <taxon>Euarchontoglires</taxon>
        <taxon>Glires</taxon>
        <taxon>Rodentia</taxon>
        <taxon>Myomorpha</taxon>
        <taxon>Muroidea</taxon>
        <taxon>Muridae</taxon>
        <taxon>Murinae</taxon>
        <taxon>Mus</taxon>
        <taxon>Mus</taxon>
    </lineage>
</organism>
<reference key="1">
    <citation type="journal article" date="1993" name="Mol. Cell. Biol.">
        <title>Mouse GATA-4: a retinoic acid-inducible GATA-binding transcription factor expressed in endodermally derived tissues and heart.</title>
        <authorList>
            <person name="Arceci R.J."/>
            <person name="King A.A."/>
            <person name="Simon M.C."/>
            <person name="Orkin S.H."/>
            <person name="Wilson D.B."/>
        </authorList>
    </citation>
    <scope>NUCLEOTIDE SEQUENCE [MRNA]</scope>
</reference>
<reference key="2">
    <citation type="journal article" date="1994" name="J. Biol. Chem.">
        <title>GATA-4/5/6, a subfamily of three transcription factors transcribed in developing heart and gut.</title>
        <authorList>
            <person name="Laverriere A.C."/>
            <person name="Macneill C."/>
            <person name="Mueller C."/>
            <person name="Poelmann R.E."/>
            <person name="Burch J.B.E."/>
            <person name="Evans T."/>
        </authorList>
    </citation>
    <scope>IDENTIFICATION OF PROBABLE FRAMESHIFTS</scope>
</reference>
<reference key="3">
    <citation type="submission" date="1997-01" db="EMBL/GenBank/DDBJ databases">
        <title>Murine GATA-4 is expressed in heart and gut tissues.</title>
        <authorList>
            <person name="Morrisey E.E."/>
            <person name="Parmacek M.S."/>
        </authorList>
    </citation>
    <scope>NUCLEOTIDE SEQUENCE [MRNA]</scope>
</reference>
<reference key="4">
    <citation type="submission" date="1999-08" db="EMBL/GenBank/DDBJ databases">
        <authorList>
            <person name="Katsuoka F."/>
            <person name="Motohashi H."/>
            <person name="Yamamoto M."/>
        </authorList>
    </citation>
    <scope>NUCLEOTIDE SEQUENCE [MRNA]</scope>
    <source>
        <strain>C57BL/6 X DBA/2</strain>
        <tissue>Heart</tissue>
    </source>
</reference>
<reference key="5">
    <citation type="journal article" date="2009" name="PLoS Biol.">
        <title>Lineage-specific biology revealed by a finished genome assembly of the mouse.</title>
        <authorList>
            <person name="Church D.M."/>
            <person name="Goodstadt L."/>
            <person name="Hillier L.W."/>
            <person name="Zody M.C."/>
            <person name="Goldstein S."/>
            <person name="She X."/>
            <person name="Bult C.J."/>
            <person name="Agarwala R."/>
            <person name="Cherry J.L."/>
            <person name="DiCuccio M."/>
            <person name="Hlavina W."/>
            <person name="Kapustin Y."/>
            <person name="Meric P."/>
            <person name="Maglott D."/>
            <person name="Birtle Z."/>
            <person name="Marques A.C."/>
            <person name="Graves T."/>
            <person name="Zhou S."/>
            <person name="Teague B."/>
            <person name="Potamousis K."/>
            <person name="Churas C."/>
            <person name="Place M."/>
            <person name="Herschleb J."/>
            <person name="Runnheim R."/>
            <person name="Forrest D."/>
            <person name="Amos-Landgraf J."/>
            <person name="Schwartz D.C."/>
            <person name="Cheng Z."/>
            <person name="Lindblad-Toh K."/>
            <person name="Eichler E.E."/>
            <person name="Ponting C.P."/>
        </authorList>
    </citation>
    <scope>NUCLEOTIDE SEQUENCE [LARGE SCALE GENOMIC DNA]</scope>
    <source>
        <strain>C57BL/6J</strain>
    </source>
</reference>
<reference key="6">
    <citation type="submission" date="2005-07" db="EMBL/GenBank/DDBJ databases">
        <authorList>
            <person name="Mural R.J."/>
            <person name="Adams M.D."/>
            <person name="Myers E.W."/>
            <person name="Smith H.O."/>
            <person name="Venter J.C."/>
        </authorList>
    </citation>
    <scope>NUCLEOTIDE SEQUENCE [LARGE SCALE GENOMIC DNA]</scope>
</reference>
<reference key="7">
    <citation type="journal article" date="2004" name="Genome Res.">
        <title>The status, quality, and expansion of the NIH full-length cDNA project: the Mammalian Gene Collection (MGC).</title>
        <authorList>
            <consortium name="The MGC Project Team"/>
        </authorList>
    </citation>
    <scope>NUCLEOTIDE SEQUENCE [LARGE SCALE MRNA]</scope>
    <source>
        <tissue>Brain</tissue>
    </source>
</reference>
<reference key="8">
    <citation type="journal article" date="1995" name="Biochem. J.">
        <title>Regulation of J6 gene expression by transcription factor GATA-4.</title>
        <authorList>
            <person name="Bielinska M."/>
            <person name="Wilson D.B."/>
        </authorList>
    </citation>
    <scope>CHARACTERIZATION</scope>
</reference>
<reference key="9">
    <citation type="journal article" date="1998" name="Cell">
        <title>A calcineurin-dependent transcriptional pathway for cardiac hypertrophy.</title>
        <authorList>
            <person name="Molkentin J.D."/>
            <person name="Lu J.-R."/>
            <person name="Antos C.L."/>
            <person name="Markham B."/>
            <person name="Richardson J."/>
            <person name="Robbins J."/>
            <person name="Grant S.R."/>
            <person name="Olson E.N."/>
        </authorList>
    </citation>
    <scope>INTERACTION WITH NFATC4</scope>
</reference>
<reference key="10">
    <citation type="journal article" date="1998" name="Mol. Cell. Biol.">
        <title>The cardiac tissue-restricted homeobox protein Csx/Nkx2.5 physically associates with the zinc finger protein GATA4 and cooperatively activates atrial natriuretic factor gene expression.</title>
        <authorList>
            <person name="Lee Y."/>
            <person name="Shioi T."/>
            <person name="Kasahara H."/>
            <person name="Jobe S.M."/>
            <person name="Wiese R.J."/>
            <person name="Markham B.E."/>
            <person name="Izumo S."/>
        </authorList>
    </citation>
    <scope>FUNCTION</scope>
    <scope>INTERACTION WITH NKX2-5</scope>
</reference>
<reference key="11">
    <citation type="journal article" date="2004" name="Mol. Cell. Biol.">
        <title>Jumonji represses atrial natriuretic factor gene expression by inhibiting transcriptional activities of cardiac transcription factors.</title>
        <authorList>
            <person name="Kim T.-G."/>
            <person name="Chen J."/>
            <person name="Sadoshima J."/>
            <person name="Lee Y."/>
        </authorList>
    </citation>
    <scope>INTERACTION WITH JARID2</scope>
</reference>
<reference key="12">
    <citation type="journal article" date="2005" name="Mol. Cell. Biol.">
        <title>LMCD1/Dyxin is a novel transcriptional cofactor that restricts GATA6 function by inhibiting DNA binding.</title>
        <authorList>
            <person name="Rath N."/>
            <person name="Wang Z."/>
            <person name="Lu M.M."/>
            <person name="Morrisey E.E."/>
        </authorList>
    </citation>
    <scope>INTERACTION WITH LMCD1</scope>
</reference>
<reference key="13">
    <citation type="journal article" date="2007" name="J. Biol. Chem.">
        <title>Transcriptional repression by the T-box proteins Tbx18 and Tbx15 depends on Groucho corepressors.</title>
        <authorList>
            <person name="Farin H.F."/>
            <person name="Bussen M."/>
            <person name="Schmidt M.K."/>
            <person name="Singh M.K."/>
            <person name="Schuster-Gossler K."/>
            <person name="Kispert A."/>
        </authorList>
    </citation>
    <scope>INTERACTION WITH TBX18</scope>
</reference>
<reference key="14">
    <citation type="journal article" date="2012" name="Genes Dev.">
        <title>PRC2 directly methylates GATA4 and represses its transcriptional activity.</title>
        <authorList>
            <person name="He A."/>
            <person name="Shen X."/>
            <person name="Ma Q."/>
            <person name="Cao J."/>
            <person name="von Gise A."/>
            <person name="Zhou P."/>
            <person name="Wang G."/>
            <person name="Marquez V.E."/>
            <person name="Orkin S.H."/>
            <person name="Pu W.T."/>
        </authorList>
    </citation>
    <scope>METHYLATION AT LYS-299</scope>
</reference>
<reference key="15">
    <citation type="journal article" date="2021" name="Nat. Cell Biol.">
        <title>The histone reader PHF7 cooperates with the SWI/SNF complex at cardiac super enhancers to promote direct reprogramming.</title>
        <authorList>
            <person name="Garry G.A."/>
            <person name="Bezprozvannaya S."/>
            <person name="Chen K."/>
            <person name="Zhou H."/>
            <person name="Hashimoto H."/>
            <person name="Morales M.G."/>
            <person name="Liu N."/>
            <person name="Bassel-Duby R."/>
            <person name="Olson E.N."/>
        </authorList>
    </citation>
    <scope>FUNCTION</scope>
    <scope>INTERACTION WITH PHF7</scope>
</reference>
<reference key="16">
    <citation type="journal article" date="2022" name="Cell">
        <title>Transcription factor protein interactomes reveal genetic determinants in heart disease.</title>
        <authorList>
            <person name="Gonzalez-Teran B."/>
            <person name="Pittman M."/>
            <person name="Felix F."/>
            <person name="Thomas R."/>
            <person name="Richmond-Buccola D."/>
            <person name="Huettenhain R."/>
            <person name="Choudhary K."/>
            <person name="Moroni E."/>
            <person name="Costa M.W."/>
            <person name="Huang Y."/>
            <person name="Padmanabhan A."/>
            <person name="Alexanian M."/>
            <person name="Lee C.Y."/>
            <person name="Maven B.E.J."/>
            <person name="Samse-Knapp K."/>
            <person name="Morton S.U."/>
            <person name="McGregor M."/>
            <person name="Gifford C.A."/>
            <person name="Seidman J.G."/>
            <person name="Seidman C.E."/>
            <person name="Gelb B.D."/>
            <person name="Colombo G."/>
            <person name="Conklin B.R."/>
            <person name="Black B.L."/>
            <person name="Bruneau B.G."/>
            <person name="Krogan N.J."/>
            <person name="Pollard K.S."/>
            <person name="Srivastava D."/>
        </authorList>
    </citation>
    <scope>FUNCTION</scope>
</reference>
<keyword id="KW-0010">Activator</keyword>
<keyword id="KW-0238">DNA-binding</keyword>
<keyword id="KW-0479">Metal-binding</keyword>
<keyword id="KW-0488">Methylation</keyword>
<keyword id="KW-0539">Nucleus</keyword>
<keyword id="KW-1185">Reference proteome</keyword>
<keyword id="KW-0677">Repeat</keyword>
<keyword id="KW-0804">Transcription</keyword>
<keyword id="KW-0805">Transcription regulation</keyword>
<keyword id="KW-0862">Zinc</keyword>
<keyword id="KW-0863">Zinc-finger</keyword>
<accession>Q08369</accession>
<accession>B9EHF7</accession>
<accession>P97491</accession>
<accession>Q9QZK4</accession>
<protein>
    <recommendedName>
        <fullName>Transcription factor GATA-4</fullName>
    </recommendedName>
    <alternativeName>
        <fullName>GATA-binding factor 4</fullName>
    </alternativeName>
</protein>
<dbReference type="EMBL" id="M98339">
    <property type="protein sequence ID" value="AAA37662.1"/>
    <property type="status" value="ALT_FRAME"/>
    <property type="molecule type" value="mRNA"/>
</dbReference>
<dbReference type="EMBL" id="U85046">
    <property type="protein sequence ID" value="AAB42015.1"/>
    <property type="molecule type" value="mRNA"/>
</dbReference>
<dbReference type="EMBL" id="AF179424">
    <property type="protein sequence ID" value="AAD55266.1"/>
    <property type="molecule type" value="mRNA"/>
</dbReference>
<dbReference type="EMBL" id="AC090654">
    <property type="status" value="NOT_ANNOTATED_CDS"/>
    <property type="molecule type" value="Genomic_DNA"/>
</dbReference>
<dbReference type="EMBL" id="AC090962">
    <property type="status" value="NOT_ANNOTATED_CDS"/>
    <property type="molecule type" value="Genomic_DNA"/>
</dbReference>
<dbReference type="EMBL" id="CH466535">
    <property type="protein sequence ID" value="EDL36067.1"/>
    <property type="molecule type" value="Genomic_DNA"/>
</dbReference>
<dbReference type="EMBL" id="BC137824">
    <property type="protein sequence ID" value="AAI37825.1"/>
    <property type="molecule type" value="mRNA"/>
</dbReference>
<dbReference type="CCDS" id="CCDS49519.1"/>
<dbReference type="PIR" id="A48099">
    <property type="entry name" value="A48099"/>
</dbReference>
<dbReference type="RefSeq" id="NP_032118.2">
    <property type="nucleotide sequence ID" value="NM_008092.4"/>
</dbReference>
<dbReference type="SMR" id="Q08369"/>
<dbReference type="BioGRID" id="199841">
    <property type="interactions" value="20"/>
</dbReference>
<dbReference type="DIP" id="DIP-33032N"/>
<dbReference type="FunCoup" id="Q08369">
    <property type="interactions" value="830"/>
</dbReference>
<dbReference type="IntAct" id="Q08369">
    <property type="interactions" value="4"/>
</dbReference>
<dbReference type="MINT" id="Q08369"/>
<dbReference type="STRING" id="10090.ENSMUSP00000066927"/>
<dbReference type="BindingDB" id="Q08369"/>
<dbReference type="ChEMBL" id="CHEMBL1687680"/>
<dbReference type="GlyGen" id="Q08369">
    <property type="glycosylation" value="1 site, 1 O-linked glycan (1 site)"/>
</dbReference>
<dbReference type="iPTMnet" id="Q08369"/>
<dbReference type="PhosphoSitePlus" id="Q08369"/>
<dbReference type="SwissPalm" id="Q08369"/>
<dbReference type="PaxDb" id="10090-ENSMUSP00000066927"/>
<dbReference type="ProteomicsDB" id="271190"/>
<dbReference type="Pumba" id="Q08369"/>
<dbReference type="Antibodypedia" id="3405">
    <property type="antibodies" value="768 antibodies from 45 providers"/>
</dbReference>
<dbReference type="DNASU" id="14463"/>
<dbReference type="Ensembl" id="ENSMUST00000118022.8">
    <property type="protein sequence ID" value="ENSMUSP00000113891.2"/>
    <property type="gene ID" value="ENSMUSG00000021944.16"/>
</dbReference>
<dbReference type="GeneID" id="14463"/>
<dbReference type="KEGG" id="mmu:14463"/>
<dbReference type="UCSC" id="uc007uhn.1">
    <property type="organism name" value="mouse"/>
</dbReference>
<dbReference type="AGR" id="MGI:95664"/>
<dbReference type="CTD" id="2626"/>
<dbReference type="MGI" id="MGI:95664">
    <property type="gene designation" value="Gata4"/>
</dbReference>
<dbReference type="VEuPathDB" id="HostDB:ENSMUSG00000021944"/>
<dbReference type="eggNOG" id="KOG1601">
    <property type="taxonomic scope" value="Eukaryota"/>
</dbReference>
<dbReference type="GeneTree" id="ENSGT00940000158349"/>
<dbReference type="HOGENOM" id="CLU_027524_0_0_1"/>
<dbReference type="InParanoid" id="Q08369"/>
<dbReference type="OMA" id="MANHGPP"/>
<dbReference type="OrthoDB" id="515401at2759"/>
<dbReference type="PhylomeDB" id="Q08369"/>
<dbReference type="Reactome" id="R-MMU-983231">
    <property type="pathway name" value="Factors involved in megakaryocyte development and platelet production"/>
</dbReference>
<dbReference type="BioGRID-ORCS" id="14463">
    <property type="hits" value="7 hits in 80 CRISPR screens"/>
</dbReference>
<dbReference type="PRO" id="PR:Q08369"/>
<dbReference type="Proteomes" id="UP000000589">
    <property type="component" value="Chromosome 14"/>
</dbReference>
<dbReference type="RNAct" id="Q08369">
    <property type="molecule type" value="protein"/>
</dbReference>
<dbReference type="Bgee" id="ENSMUSG00000021944">
    <property type="expression patterns" value="Expressed in epithelium of stomach and 116 other cell types or tissues"/>
</dbReference>
<dbReference type="ExpressionAtlas" id="Q08369">
    <property type="expression patterns" value="baseline and differential"/>
</dbReference>
<dbReference type="GO" id="GO:0000785">
    <property type="term" value="C:chromatin"/>
    <property type="evidence" value="ECO:0000314"/>
    <property type="project" value="BHF-UCL"/>
</dbReference>
<dbReference type="GO" id="GO:0005654">
    <property type="term" value="C:nucleoplasm"/>
    <property type="evidence" value="ECO:0000304"/>
    <property type="project" value="Reactome"/>
</dbReference>
<dbReference type="GO" id="GO:0005634">
    <property type="term" value="C:nucleus"/>
    <property type="evidence" value="ECO:0000314"/>
    <property type="project" value="BHF-UCL"/>
</dbReference>
<dbReference type="GO" id="GO:0003682">
    <property type="term" value="F:chromatin binding"/>
    <property type="evidence" value="ECO:0000314"/>
    <property type="project" value="MGI"/>
</dbReference>
<dbReference type="GO" id="GO:0003677">
    <property type="term" value="F:DNA binding"/>
    <property type="evidence" value="ECO:0000314"/>
    <property type="project" value="MGI"/>
</dbReference>
<dbReference type="GO" id="GO:0003700">
    <property type="term" value="F:DNA-binding transcription factor activity"/>
    <property type="evidence" value="ECO:0000314"/>
    <property type="project" value="MGI"/>
</dbReference>
<dbReference type="GO" id="GO:0000981">
    <property type="term" value="F:DNA-binding transcription factor activity, RNA polymerase II-specific"/>
    <property type="evidence" value="ECO:0000314"/>
    <property type="project" value="UniProtKB"/>
</dbReference>
<dbReference type="GO" id="GO:0000978">
    <property type="term" value="F:RNA polymerase II cis-regulatory region sequence-specific DNA binding"/>
    <property type="evidence" value="ECO:0000314"/>
    <property type="project" value="BHF-UCL"/>
</dbReference>
<dbReference type="GO" id="GO:0000977">
    <property type="term" value="F:RNA polymerase II transcription regulatory region sequence-specific DNA binding"/>
    <property type="evidence" value="ECO:0000314"/>
    <property type="project" value="MGI"/>
</dbReference>
<dbReference type="GO" id="GO:0043565">
    <property type="term" value="F:sequence-specific DNA binding"/>
    <property type="evidence" value="ECO:0000314"/>
    <property type="project" value="MGI"/>
</dbReference>
<dbReference type="GO" id="GO:0000976">
    <property type="term" value="F:transcription cis-regulatory region binding"/>
    <property type="evidence" value="ECO:0000266"/>
    <property type="project" value="MGI"/>
</dbReference>
<dbReference type="GO" id="GO:0001223">
    <property type="term" value="F:transcription coactivator binding"/>
    <property type="evidence" value="ECO:0000353"/>
    <property type="project" value="BHF-UCL"/>
</dbReference>
<dbReference type="GO" id="GO:0008270">
    <property type="term" value="F:zinc ion binding"/>
    <property type="evidence" value="ECO:0007669"/>
    <property type="project" value="UniProtKB-KW"/>
</dbReference>
<dbReference type="GO" id="GO:0003289">
    <property type="term" value="P:atrial septum primum morphogenesis"/>
    <property type="evidence" value="ECO:0000315"/>
    <property type="project" value="BHF-UCL"/>
</dbReference>
<dbReference type="GO" id="GO:0036302">
    <property type="term" value="P:atrioventricular canal development"/>
    <property type="evidence" value="ECO:0000316"/>
    <property type="project" value="BHF-UCL"/>
</dbReference>
<dbReference type="GO" id="GO:0003190">
    <property type="term" value="P:atrioventricular valve formation"/>
    <property type="evidence" value="ECO:0000316"/>
    <property type="project" value="BHF-UCL"/>
</dbReference>
<dbReference type="GO" id="GO:0003181">
    <property type="term" value="P:atrioventricular valve morphogenesis"/>
    <property type="evidence" value="ECO:0000316"/>
    <property type="project" value="MGI"/>
</dbReference>
<dbReference type="GO" id="GO:0055007">
    <property type="term" value="P:cardiac muscle cell differentiation"/>
    <property type="evidence" value="ECO:0000315"/>
    <property type="project" value="MGI"/>
</dbReference>
<dbReference type="GO" id="GO:0060038">
    <property type="term" value="P:cardiac muscle cell proliferation"/>
    <property type="evidence" value="ECO:0000316"/>
    <property type="project" value="MGI"/>
</dbReference>
<dbReference type="GO" id="GO:0014898">
    <property type="term" value="P:cardiac muscle hypertrophy in response to stress"/>
    <property type="evidence" value="ECO:0000315"/>
    <property type="project" value="MGI"/>
</dbReference>
<dbReference type="GO" id="GO:0048738">
    <property type="term" value="P:cardiac muscle tissue development"/>
    <property type="evidence" value="ECO:0000316"/>
    <property type="project" value="MGI"/>
</dbReference>
<dbReference type="GO" id="GO:0061026">
    <property type="term" value="P:cardiac muscle tissue regeneration"/>
    <property type="evidence" value="ECO:0000314"/>
    <property type="project" value="BHF-UCL"/>
</dbReference>
<dbReference type="GO" id="GO:0003215">
    <property type="term" value="P:cardiac right ventricle morphogenesis"/>
    <property type="evidence" value="ECO:0000315"/>
    <property type="project" value="BHF-UCL"/>
</dbReference>
<dbReference type="GO" id="GO:0003279">
    <property type="term" value="P:cardiac septum development"/>
    <property type="evidence" value="ECO:0000316"/>
    <property type="project" value="BHF-UCL"/>
</dbReference>
<dbReference type="GO" id="GO:0007267">
    <property type="term" value="P:cell-cell signaling"/>
    <property type="evidence" value="ECO:0000315"/>
    <property type="project" value="MGI"/>
</dbReference>
<dbReference type="GO" id="GO:0071372">
    <property type="term" value="P:cellular response to follicle-stimulating hormone stimulus"/>
    <property type="evidence" value="ECO:0000314"/>
    <property type="project" value="MGI"/>
</dbReference>
<dbReference type="GO" id="GO:0071371">
    <property type="term" value="P:cellular response to gonadotropin stimulus"/>
    <property type="evidence" value="ECO:0000314"/>
    <property type="project" value="MGI"/>
</dbReference>
<dbReference type="GO" id="GO:0060540">
    <property type="term" value="P:diaphragm morphogenesis"/>
    <property type="evidence" value="ECO:0000304"/>
    <property type="project" value="BHF-UCL"/>
</dbReference>
<dbReference type="GO" id="GO:0048557">
    <property type="term" value="P:embryonic digestive tract morphogenesis"/>
    <property type="evidence" value="ECO:0000315"/>
    <property type="project" value="MGI"/>
</dbReference>
<dbReference type="GO" id="GO:0048617">
    <property type="term" value="P:embryonic foregut morphogenesis"/>
    <property type="evidence" value="ECO:0000315"/>
    <property type="project" value="MGI"/>
</dbReference>
<dbReference type="GO" id="GO:0035054">
    <property type="term" value="P:embryonic heart tube anterior/posterior pattern specification"/>
    <property type="evidence" value="ECO:0000315"/>
    <property type="project" value="MGI"/>
</dbReference>
<dbReference type="GO" id="GO:0035050">
    <property type="term" value="P:embryonic heart tube development"/>
    <property type="evidence" value="ECO:0000315"/>
    <property type="project" value="MGI"/>
</dbReference>
<dbReference type="GO" id="GO:0048598">
    <property type="term" value="P:embryonic morphogenesis"/>
    <property type="evidence" value="ECO:0000315"/>
    <property type="project" value="MGI"/>
</dbReference>
<dbReference type="GO" id="GO:0003197">
    <property type="term" value="P:endocardial cushion development"/>
    <property type="evidence" value="ECO:0000315"/>
    <property type="project" value="BHF-UCL"/>
</dbReference>
<dbReference type="GO" id="GO:0001706">
    <property type="term" value="P:endoderm formation"/>
    <property type="evidence" value="ECO:0000315"/>
    <property type="project" value="MGI"/>
</dbReference>
<dbReference type="GO" id="GO:0072148">
    <property type="term" value="P:epithelial cell fate commitment"/>
    <property type="evidence" value="ECO:0000315"/>
    <property type="project" value="MGI"/>
</dbReference>
<dbReference type="GO" id="GO:0001702">
    <property type="term" value="P:gastrulation with mouth forming second"/>
    <property type="evidence" value="ECO:0000315"/>
    <property type="project" value="MGI"/>
</dbReference>
<dbReference type="GO" id="GO:0007507">
    <property type="term" value="P:heart development"/>
    <property type="evidence" value="ECO:0000315"/>
    <property type="project" value="MGI"/>
</dbReference>
<dbReference type="GO" id="GO:0001947">
    <property type="term" value="P:heart looping"/>
    <property type="evidence" value="ECO:0000315"/>
    <property type="project" value="BHF-UCL"/>
</dbReference>
<dbReference type="GO" id="GO:0003007">
    <property type="term" value="P:heart morphogenesis"/>
    <property type="evidence" value="ECO:0000315"/>
    <property type="project" value="BHF-UCL"/>
</dbReference>
<dbReference type="GO" id="GO:0001701">
    <property type="term" value="P:in utero embryonic development"/>
    <property type="evidence" value="ECO:0000315"/>
    <property type="project" value="MGI"/>
</dbReference>
<dbReference type="GO" id="GO:0060575">
    <property type="term" value="P:intestinal epithelial cell differentiation"/>
    <property type="evidence" value="ECO:0000266"/>
    <property type="project" value="MGI"/>
</dbReference>
<dbReference type="GO" id="GO:0060464">
    <property type="term" value="P:lung lobe formation"/>
    <property type="evidence" value="ECO:0000315"/>
    <property type="project" value="MGI"/>
</dbReference>
<dbReference type="GO" id="GO:0060425">
    <property type="term" value="P:lung morphogenesis"/>
    <property type="evidence" value="ECO:0000304"/>
    <property type="project" value="BHF-UCL"/>
</dbReference>
<dbReference type="GO" id="GO:0003192">
    <property type="term" value="P:mitral valve formation"/>
    <property type="evidence" value="ECO:0000304"/>
    <property type="project" value="BHF-UCL"/>
</dbReference>
<dbReference type="GO" id="GO:0043066">
    <property type="term" value="P:negative regulation of apoptotic process"/>
    <property type="evidence" value="ECO:0000314"/>
    <property type="project" value="BHF-UCL"/>
</dbReference>
<dbReference type="GO" id="GO:2001234">
    <property type="term" value="P:negative regulation of apoptotic signaling pathway"/>
    <property type="evidence" value="ECO:0000314"/>
    <property type="project" value="BHF-UCL"/>
</dbReference>
<dbReference type="GO" id="GO:0010667">
    <property type="term" value="P:negative regulation of cardiac muscle cell apoptotic process"/>
    <property type="evidence" value="ECO:0000316"/>
    <property type="project" value="BHF-UCL"/>
</dbReference>
<dbReference type="GO" id="GO:1905204">
    <property type="term" value="P:negative regulation of connective tissue replacement"/>
    <property type="evidence" value="ECO:0000314"/>
    <property type="project" value="BHF-UCL"/>
</dbReference>
<dbReference type="GO" id="GO:0010629">
    <property type="term" value="P:negative regulation of gene expression"/>
    <property type="evidence" value="ECO:0000314"/>
    <property type="project" value="BHF-UCL"/>
</dbReference>
<dbReference type="GO" id="GO:1902176">
    <property type="term" value="P:negative regulation of oxidative stress-induced intrinsic apoptotic signaling pathway"/>
    <property type="evidence" value="ECO:0000314"/>
    <property type="project" value="BHF-UCL"/>
</dbReference>
<dbReference type="GO" id="GO:0003151">
    <property type="term" value="P:outflow tract morphogenesis"/>
    <property type="evidence" value="ECO:0000304"/>
    <property type="project" value="BHF-UCL"/>
</dbReference>
<dbReference type="GO" id="GO:0045766">
    <property type="term" value="P:positive regulation of angiogenesis"/>
    <property type="evidence" value="ECO:0000314"/>
    <property type="project" value="BHF-UCL"/>
</dbReference>
<dbReference type="GO" id="GO:0060045">
    <property type="term" value="P:positive regulation of cardiac muscle cell proliferation"/>
    <property type="evidence" value="ECO:0000316"/>
    <property type="project" value="MGI"/>
</dbReference>
<dbReference type="GO" id="GO:0045787">
    <property type="term" value="P:positive regulation of cell cycle"/>
    <property type="evidence" value="ECO:0000314"/>
    <property type="project" value="BHF-UCL"/>
</dbReference>
<dbReference type="GO" id="GO:0045893">
    <property type="term" value="P:positive regulation of DNA-templated transcription"/>
    <property type="evidence" value="ECO:0000314"/>
    <property type="project" value="UniProtKB"/>
</dbReference>
<dbReference type="GO" id="GO:0010628">
    <property type="term" value="P:positive regulation of gene expression"/>
    <property type="evidence" value="ECO:0000314"/>
    <property type="project" value="BHF-UCL"/>
</dbReference>
<dbReference type="GO" id="GO:1902895">
    <property type="term" value="P:positive regulation of miRNA transcription"/>
    <property type="evidence" value="ECO:0000314"/>
    <property type="project" value="BHF-UCL"/>
</dbReference>
<dbReference type="GO" id="GO:0045944">
    <property type="term" value="P:positive regulation of transcription by RNA polymerase II"/>
    <property type="evidence" value="ECO:0000314"/>
    <property type="project" value="BHF-UCL"/>
</dbReference>
<dbReference type="GO" id="GO:0010575">
    <property type="term" value="P:positive regulation of vascular endothelial growth factor production"/>
    <property type="evidence" value="ECO:0000314"/>
    <property type="project" value="BHF-UCL"/>
</dbReference>
<dbReference type="GO" id="GO:0060043">
    <property type="term" value="P:regulation of cardiac muscle cell proliferation"/>
    <property type="evidence" value="ECO:0000315"/>
    <property type="project" value="MGI"/>
</dbReference>
<dbReference type="GO" id="GO:0006355">
    <property type="term" value="P:regulation of DNA-templated transcription"/>
    <property type="evidence" value="ECO:0000314"/>
    <property type="project" value="MGI"/>
</dbReference>
<dbReference type="GO" id="GO:0010468">
    <property type="term" value="P:regulation of gene expression"/>
    <property type="evidence" value="ECO:0000314"/>
    <property type="project" value="MGI"/>
</dbReference>
<dbReference type="GO" id="GO:0006357">
    <property type="term" value="P:regulation of transcription by RNA polymerase II"/>
    <property type="evidence" value="ECO:0000314"/>
    <property type="project" value="MGI"/>
</dbReference>
<dbReference type="GO" id="GO:0043627">
    <property type="term" value="P:response to estrogen"/>
    <property type="evidence" value="ECO:0000314"/>
    <property type="project" value="MGI"/>
</dbReference>
<dbReference type="GO" id="GO:0032526">
    <property type="term" value="P:response to retinoic acid"/>
    <property type="evidence" value="ECO:0000314"/>
    <property type="project" value="BHF-UCL"/>
</dbReference>
<dbReference type="GO" id="GO:0072520">
    <property type="term" value="P:seminiferous tubule development"/>
    <property type="evidence" value="ECO:0000315"/>
    <property type="project" value="MGI"/>
</dbReference>
<dbReference type="GO" id="GO:0060008">
    <property type="term" value="P:Sertoli cell differentiation"/>
    <property type="evidence" value="ECO:0000315"/>
    <property type="project" value="MGI"/>
</dbReference>
<dbReference type="GO" id="GO:0023019">
    <property type="term" value="P:signal transduction involved in regulation of gene expression"/>
    <property type="evidence" value="ECO:0000314"/>
    <property type="project" value="MGI"/>
</dbReference>
<dbReference type="GO" id="GO:0035914">
    <property type="term" value="P:skeletal muscle cell differentiation"/>
    <property type="evidence" value="ECO:0000303"/>
    <property type="project" value="UniProtKB"/>
</dbReference>
<dbReference type="GO" id="GO:0007283">
    <property type="term" value="P:spermatogenesis"/>
    <property type="evidence" value="ECO:0000315"/>
    <property type="project" value="MGI"/>
</dbReference>
<dbReference type="GO" id="GO:0003195">
    <property type="term" value="P:tricuspid valve formation"/>
    <property type="evidence" value="ECO:0000304"/>
    <property type="project" value="BHF-UCL"/>
</dbReference>
<dbReference type="GO" id="GO:0035239">
    <property type="term" value="P:tube morphogenesis"/>
    <property type="evidence" value="ECO:0000316"/>
    <property type="project" value="MGI"/>
</dbReference>
<dbReference type="GO" id="GO:0060979">
    <property type="term" value="P:vasculogenesis involved in coronary vascular morphogenesis"/>
    <property type="evidence" value="ECO:0000304"/>
    <property type="project" value="DFLAT"/>
</dbReference>
<dbReference type="GO" id="GO:0003229">
    <property type="term" value="P:ventricular cardiac muscle tissue development"/>
    <property type="evidence" value="ECO:0000316"/>
    <property type="project" value="MGI"/>
</dbReference>
<dbReference type="GO" id="GO:0003281">
    <property type="term" value="P:ventricular septum development"/>
    <property type="evidence" value="ECO:0000315"/>
    <property type="project" value="BHF-UCL"/>
</dbReference>
<dbReference type="GO" id="GO:0042060">
    <property type="term" value="P:wound healing"/>
    <property type="evidence" value="ECO:0000314"/>
    <property type="project" value="BHF-UCL"/>
</dbReference>
<dbReference type="CDD" id="cd00202">
    <property type="entry name" value="ZnF_GATA"/>
    <property type="match status" value="2"/>
</dbReference>
<dbReference type="FunFam" id="3.30.50.10:FF:000001">
    <property type="entry name" value="GATA transcription factor (GATAd)"/>
    <property type="match status" value="1"/>
</dbReference>
<dbReference type="FunFam" id="3.30.50.10:FF:000032">
    <property type="entry name" value="Transcription factor GATA-3"/>
    <property type="match status" value="1"/>
</dbReference>
<dbReference type="Gene3D" id="3.30.50.10">
    <property type="entry name" value="Erythroid Transcription Factor GATA-1, subunit A"/>
    <property type="match status" value="2"/>
</dbReference>
<dbReference type="InterPro" id="IPR008013">
    <property type="entry name" value="GATA_N"/>
</dbReference>
<dbReference type="InterPro" id="IPR016375">
    <property type="entry name" value="TF_GATA_4/5/6"/>
</dbReference>
<dbReference type="InterPro" id="IPR039355">
    <property type="entry name" value="Transcription_factor_GATA"/>
</dbReference>
<dbReference type="InterPro" id="IPR000679">
    <property type="entry name" value="Znf_GATA"/>
</dbReference>
<dbReference type="InterPro" id="IPR013088">
    <property type="entry name" value="Znf_NHR/GATA"/>
</dbReference>
<dbReference type="PANTHER" id="PTHR10071">
    <property type="entry name" value="TRANSCRIPTION FACTOR GATA FAMILY MEMBER"/>
    <property type="match status" value="1"/>
</dbReference>
<dbReference type="PANTHER" id="PTHR10071:SF154">
    <property type="entry name" value="TRANSCRIPTION FACTOR GATA-4"/>
    <property type="match status" value="1"/>
</dbReference>
<dbReference type="Pfam" id="PF00320">
    <property type="entry name" value="GATA"/>
    <property type="match status" value="2"/>
</dbReference>
<dbReference type="Pfam" id="PF05349">
    <property type="entry name" value="GATA-N"/>
    <property type="match status" value="1"/>
</dbReference>
<dbReference type="PIRSF" id="PIRSF003028">
    <property type="entry name" value="TF_GATA_4/5/6"/>
    <property type="match status" value="1"/>
</dbReference>
<dbReference type="PRINTS" id="PR00619">
    <property type="entry name" value="GATAZNFINGER"/>
</dbReference>
<dbReference type="SMART" id="SM00401">
    <property type="entry name" value="ZnF_GATA"/>
    <property type="match status" value="2"/>
</dbReference>
<dbReference type="SUPFAM" id="SSF57716">
    <property type="entry name" value="Glucocorticoid receptor-like (DNA-binding domain)"/>
    <property type="match status" value="2"/>
</dbReference>
<dbReference type="PROSITE" id="PS00344">
    <property type="entry name" value="GATA_ZN_FINGER_1"/>
    <property type="match status" value="2"/>
</dbReference>
<dbReference type="PROSITE" id="PS50114">
    <property type="entry name" value="GATA_ZN_FINGER_2"/>
    <property type="match status" value="2"/>
</dbReference>
<sequence length="441" mass="44580">MYQSLAMAANHGPPPGAYEAGGPGAFMHSAGAASSPVYVPTPRVPSSVLGLSYLQGGGSAAAAGTTSGGSSGAGPSGAGPGTQQGSPGWSQAGAEGAAYTPPPVSPRFSFPGTTGSLAAAAAAAAAREAAAYGSGGGAAGAGLAGREQYGRPGFAGSYSSPYPAYMADVGASWAAAAAASAGPFDSPVLHSLPGRANPGRHPNLDMFDDFSEGRECVNCGAMSTPLWRRDGTGHYLCNACGLYHKMNGINRPLIKPQRRLSASRRVGLSCANCQTTTTTLWRRNAEGEPVCNACGLYMKLHGVPRPLAMRKEGIQTRKRKPKNLNKSKTPAGPAGETLPPSSGASSGNSSNATSSSSSSEEMRPIKTEPGLSSHYGHSSSMSQTFSTVSGHGPSIHPVLSALKLSPQGYASPVTQTSQASSKQDSWNSLVLADSHGDIITA</sequence>
<proteinExistence type="evidence at protein level"/>
<name>GATA4_MOUSE</name>
<gene>
    <name type="primary">Gata4</name>
    <name type="synonym">Gata-4</name>
</gene>
<feature type="chain" id="PRO_0000083414" description="Transcription factor GATA-4">
    <location>
        <begin position="1"/>
        <end position="441"/>
    </location>
</feature>
<feature type="zinc finger region" description="GATA-type 1" evidence="3">
    <location>
        <begin position="216"/>
        <end position="240"/>
    </location>
</feature>
<feature type="zinc finger region" description="GATA-type 2" evidence="3">
    <location>
        <begin position="270"/>
        <end position="294"/>
    </location>
</feature>
<feature type="region of interest" description="Disordered" evidence="4">
    <location>
        <begin position="60"/>
        <end position="107"/>
    </location>
</feature>
<feature type="region of interest" description="Disordered" evidence="4">
    <location>
        <begin position="313"/>
        <end position="392"/>
    </location>
</feature>
<feature type="compositionally biased region" description="Gly residues" evidence="4">
    <location>
        <begin position="66"/>
        <end position="82"/>
    </location>
</feature>
<feature type="compositionally biased region" description="Basic residues" evidence="4">
    <location>
        <begin position="316"/>
        <end position="325"/>
    </location>
</feature>
<feature type="compositionally biased region" description="Low complexity" evidence="4">
    <location>
        <begin position="341"/>
        <end position="359"/>
    </location>
</feature>
<feature type="compositionally biased region" description="Low complexity" evidence="4">
    <location>
        <begin position="372"/>
        <end position="389"/>
    </location>
</feature>
<feature type="modified residue" description="N6-methyllysine; by EZH2" evidence="8">
    <location>
        <position position="299"/>
    </location>
</feature>
<feature type="sequence conflict" description="In Ref. 1; AAA37662 and 3; AAB42015." evidence="13" ref="1 3">
    <original>FSTVSGHGPSIHPVLSAL</original>
    <variation>SVCVRPRALHPSSAVCS</variation>
    <location>
        <begin position="385"/>
        <end position="402"/>
    </location>
</feature>
<comment type="function">
    <text evidence="1 2 9 10 12">Transcriptional activator that binds to the consensus sequence 5'-AGATAG-3' and plays a key role in cardiac development (PubMed:33941892, PubMed:35182466). In cooperation with TBX5, it binds to cardiac super-enhancers and promotes cardiomyocyte gene expression, while it down-regulates endocardial and endothelial gene expression (By similarity). Involved in bone morphogenetic protein (BMP)-mediated induction of cardiac-specific gene expression (By similarity). Binds to BMP response element (BMPRE) DNA sequences within cardiac activating regions (By similarity). Acts as a transcriptional activator of ANF in cooperation with NKX2-5 (PubMed:9584153). Promotes cardiac myocyte enlargement (By similarity). Required during testicular development (By similarity). May play a role in sphingolipid signaling by regulating the expression of sphingosine-1-phosphate degrading enzyme, sphingosine-1-phosphate lyase (By similarity).</text>
</comment>
<comment type="subunit">
    <text evidence="1 5 6 7 9 11 12">Interacts with ZNF260 (By similarity). Interacts with the homeobox domain of NKX2-5 through its C-terminal zinc finger. Also interacts with JARID2 which represses its ability to activate transcription of ANF. Interacts (via the second Zn finger) with NFATC4 (PubMed:9568714). Interacts with LMCD1 (PubMed:16199866). Forms a complex made of CDK9, CCNT1/cyclin-T1, EP300 and GATA4 that stimulates hypertrophy in cardiomyocytes. Interacts with NR5A1, ZFPM2 and TBX5. Interacts with TBX18. Interacts with GLYR1; the interaction is required for a synergistic activation of GATA4 target genes transcription (By similarity). Interacts with PHF7; the interaction promotes GATA4 binding to its transcription targets (PubMed:33941892).</text>
</comment>
<comment type="interaction">
    <interactant intactId="EBI-297008">
        <id>Q08369</id>
    </interactant>
    <interactant intactId="EBI-493592">
        <id>Q62315</id>
        <label>Jarid2</label>
    </interactant>
    <organismsDiffer>false</organismsDiffer>
    <experiments>3</experiments>
</comment>
<comment type="interaction">
    <interactant intactId="EBI-297008">
        <id>Q08369</id>
    </interactant>
    <interactant intactId="EBI-297021">
        <id>P42582</id>
        <label>Nkx2-5</label>
    </interactant>
    <organismsDiffer>false</organismsDiffer>
    <experiments>4</experiments>
</comment>
<comment type="interaction">
    <interactant intactId="EBI-297008">
        <id>Q08369</id>
    </interactant>
    <interactant intactId="EBI-297043">
        <id>Q99593</id>
        <label>TBX5</label>
    </interactant>
    <organismsDiffer>true</organismsDiffer>
    <experiments>2</experiments>
</comment>
<comment type="subcellular location">
    <subcellularLocation>
        <location evidence="1">Nucleus</location>
    </subcellularLocation>
</comment>
<comment type="tissue specificity">
    <text>Heart, intestine, liver, primative endoderm and gonads.</text>
</comment>
<comment type="induction">
    <text>By retinoic acid.</text>
</comment>
<comment type="PTM">
    <text evidence="8">Methylation at Lys-299 attenuates transcriptional activity.</text>
</comment>
<comment type="sequence caution" evidence="13">
    <conflict type="frameshift">
        <sequence resource="EMBL-CDS" id="AAA37662"/>
    </conflict>
</comment>
<evidence type="ECO:0000250" key="1">
    <source>
        <dbReference type="UniProtKB" id="P43694"/>
    </source>
</evidence>
<evidence type="ECO:0000250" key="2">
    <source>
        <dbReference type="UniProtKB" id="P46152"/>
    </source>
</evidence>
<evidence type="ECO:0000255" key="3">
    <source>
        <dbReference type="PROSITE-ProRule" id="PRU00094"/>
    </source>
</evidence>
<evidence type="ECO:0000256" key="4">
    <source>
        <dbReference type="SAM" id="MobiDB-lite"/>
    </source>
</evidence>
<evidence type="ECO:0000269" key="5">
    <source>
    </source>
</evidence>
<evidence type="ECO:0000269" key="6">
    <source>
    </source>
</evidence>
<evidence type="ECO:0000269" key="7">
    <source>
    </source>
</evidence>
<evidence type="ECO:0000269" key="8">
    <source>
    </source>
</evidence>
<evidence type="ECO:0000269" key="9">
    <source>
    </source>
</evidence>
<evidence type="ECO:0000269" key="10">
    <source>
    </source>
</evidence>
<evidence type="ECO:0000269" key="11">
    <source>
    </source>
</evidence>
<evidence type="ECO:0000269" key="12">
    <source>
    </source>
</evidence>
<evidence type="ECO:0000305" key="13"/>